<comment type="catalytic activity">
    <reaction evidence="1">
        <text>2-(N(omega)-L-arginino)succinate = fumarate + L-arginine</text>
        <dbReference type="Rhea" id="RHEA:24020"/>
        <dbReference type="ChEBI" id="CHEBI:29806"/>
        <dbReference type="ChEBI" id="CHEBI:32682"/>
        <dbReference type="ChEBI" id="CHEBI:57472"/>
        <dbReference type="EC" id="4.3.2.1"/>
    </reaction>
</comment>
<comment type="pathway">
    <text evidence="1">Amino-acid biosynthesis; L-arginine biosynthesis; L-arginine from L-ornithine and carbamoyl phosphate: step 3/3.</text>
</comment>
<comment type="subcellular location">
    <subcellularLocation>
        <location evidence="1">Cytoplasm</location>
    </subcellularLocation>
</comment>
<comment type="similarity">
    <text evidence="1">Belongs to the lyase 1 family. Argininosuccinate lyase subfamily.</text>
</comment>
<organism>
    <name type="scientific">Methanococcoides burtonii (strain DSM 6242 / NBRC 107633 / OCM 468 / ACE-M)</name>
    <dbReference type="NCBI Taxonomy" id="259564"/>
    <lineage>
        <taxon>Archaea</taxon>
        <taxon>Methanobacteriati</taxon>
        <taxon>Methanobacteriota</taxon>
        <taxon>Stenosarchaea group</taxon>
        <taxon>Methanomicrobia</taxon>
        <taxon>Methanosarcinales</taxon>
        <taxon>Methanosarcinaceae</taxon>
        <taxon>Methanococcoides</taxon>
    </lineage>
</organism>
<feature type="chain" id="PRO_1000000498" description="Argininosuccinate lyase">
    <location>
        <begin position="1"/>
        <end position="491"/>
    </location>
</feature>
<sequence length="491" mass="54140">MSDILRRGRLASVPDEEIINFTSSMNADKWIFKADILVDLAHTIMLKERKIIKAEDCKKILEGLLTIKEEGIEKLDHTYEDIHISLESRLIDMVGEDTGGRMHSGRSRNDEVATCIRLTLRNDLLLLMEELIALRNTLNDTSSENLNTLMPGFTHLQHAQPTTLAHHLTAHANAIGRDLERTMDCYKRVNLSPLGAAAFASTGFDLDRERTCKLLGFDGLIENSMDAVSSRDFLIESASVFANLMINLSKVAEEIVIWSTSEFAFIELDDRYASTSSIMPQKKNPDTAELLRGKSGVTIGSLMSLLAICKALPLSYNRDLQEATPNIMQSLETTRASVRIMNGMIATMSINKENMAGLATAGFTTATELADTMVRVCDIPFRTAHQIVGVLARGSGEPTLGEIDAVAHNVIGESLSSRGLTEKMVKEALDPILNVSKRSVIGGPSPESMERLIESSRERIANNTEILESLIANRDNAIESLFCEVEKCIDV</sequence>
<evidence type="ECO:0000255" key="1">
    <source>
        <dbReference type="HAMAP-Rule" id="MF_00006"/>
    </source>
</evidence>
<keyword id="KW-0028">Amino-acid biosynthesis</keyword>
<keyword id="KW-0055">Arginine biosynthesis</keyword>
<keyword id="KW-0963">Cytoplasm</keyword>
<keyword id="KW-0456">Lyase</keyword>
<proteinExistence type="inferred from homology"/>
<protein>
    <recommendedName>
        <fullName evidence="1">Argininosuccinate lyase</fullName>
        <shortName evidence="1">ASAL</shortName>
        <ecNumber evidence="1">4.3.2.1</ecNumber>
    </recommendedName>
    <alternativeName>
        <fullName evidence="1">Arginosuccinase</fullName>
    </alternativeName>
</protein>
<dbReference type="EC" id="4.3.2.1" evidence="1"/>
<dbReference type="EMBL" id="CP000300">
    <property type="protein sequence ID" value="ABE51960.1"/>
    <property type="molecule type" value="Genomic_DNA"/>
</dbReference>
<dbReference type="RefSeq" id="WP_011499109.1">
    <property type="nucleotide sequence ID" value="NC_007955.1"/>
</dbReference>
<dbReference type="SMR" id="Q12X66"/>
<dbReference type="STRING" id="259564.Mbur_1025"/>
<dbReference type="GeneID" id="3998128"/>
<dbReference type="KEGG" id="mbu:Mbur_1025"/>
<dbReference type="HOGENOM" id="CLU_027272_2_3_2"/>
<dbReference type="OrthoDB" id="27337at2157"/>
<dbReference type="UniPathway" id="UPA00068">
    <property type="reaction ID" value="UER00114"/>
</dbReference>
<dbReference type="Proteomes" id="UP000001979">
    <property type="component" value="Chromosome"/>
</dbReference>
<dbReference type="GO" id="GO:0005829">
    <property type="term" value="C:cytosol"/>
    <property type="evidence" value="ECO:0007669"/>
    <property type="project" value="TreeGrafter"/>
</dbReference>
<dbReference type="GO" id="GO:0004056">
    <property type="term" value="F:argininosuccinate lyase activity"/>
    <property type="evidence" value="ECO:0007669"/>
    <property type="project" value="UniProtKB-UniRule"/>
</dbReference>
<dbReference type="GO" id="GO:0042450">
    <property type="term" value="P:arginine biosynthetic process via ornithine"/>
    <property type="evidence" value="ECO:0007669"/>
    <property type="project" value="InterPro"/>
</dbReference>
<dbReference type="GO" id="GO:0006526">
    <property type="term" value="P:L-arginine biosynthetic process"/>
    <property type="evidence" value="ECO:0007669"/>
    <property type="project" value="UniProtKB-UniRule"/>
</dbReference>
<dbReference type="CDD" id="cd01359">
    <property type="entry name" value="Argininosuccinate_lyase"/>
    <property type="match status" value="1"/>
</dbReference>
<dbReference type="FunFam" id="1.20.200.10:FF:000015">
    <property type="entry name" value="argininosuccinate lyase isoform X2"/>
    <property type="match status" value="1"/>
</dbReference>
<dbReference type="Gene3D" id="1.10.40.30">
    <property type="entry name" value="Fumarase/aspartase (C-terminal domain)"/>
    <property type="match status" value="1"/>
</dbReference>
<dbReference type="Gene3D" id="1.20.200.10">
    <property type="entry name" value="Fumarase/aspartase (Central domain)"/>
    <property type="match status" value="1"/>
</dbReference>
<dbReference type="Gene3D" id="1.10.275.10">
    <property type="entry name" value="Fumarase/aspartase (N-terminal domain)"/>
    <property type="match status" value="1"/>
</dbReference>
<dbReference type="HAMAP" id="MF_00006">
    <property type="entry name" value="Arg_succ_lyase"/>
    <property type="match status" value="1"/>
</dbReference>
<dbReference type="InterPro" id="IPR029419">
    <property type="entry name" value="Arg_succ_lyase_C"/>
</dbReference>
<dbReference type="InterPro" id="IPR009049">
    <property type="entry name" value="Argininosuccinate_lyase"/>
</dbReference>
<dbReference type="InterPro" id="IPR024083">
    <property type="entry name" value="Fumarase/histidase_N"/>
</dbReference>
<dbReference type="InterPro" id="IPR000362">
    <property type="entry name" value="Fumarate_lyase_fam"/>
</dbReference>
<dbReference type="InterPro" id="IPR022761">
    <property type="entry name" value="Fumarate_lyase_N"/>
</dbReference>
<dbReference type="InterPro" id="IPR008948">
    <property type="entry name" value="L-Aspartase-like"/>
</dbReference>
<dbReference type="NCBIfam" id="TIGR00838">
    <property type="entry name" value="argH"/>
    <property type="match status" value="1"/>
</dbReference>
<dbReference type="PANTHER" id="PTHR43814">
    <property type="entry name" value="ARGININOSUCCINATE LYASE"/>
    <property type="match status" value="1"/>
</dbReference>
<dbReference type="PANTHER" id="PTHR43814:SF1">
    <property type="entry name" value="ARGININOSUCCINATE LYASE"/>
    <property type="match status" value="1"/>
</dbReference>
<dbReference type="Pfam" id="PF14698">
    <property type="entry name" value="ASL_C2"/>
    <property type="match status" value="1"/>
</dbReference>
<dbReference type="Pfam" id="PF00206">
    <property type="entry name" value="Lyase_1"/>
    <property type="match status" value="1"/>
</dbReference>
<dbReference type="PRINTS" id="PR00145">
    <property type="entry name" value="ARGSUCLYASE"/>
</dbReference>
<dbReference type="PRINTS" id="PR00149">
    <property type="entry name" value="FUMRATELYASE"/>
</dbReference>
<dbReference type="SUPFAM" id="SSF48557">
    <property type="entry name" value="L-aspartase-like"/>
    <property type="match status" value="1"/>
</dbReference>
<gene>
    <name evidence="1" type="primary">argH</name>
    <name type="ordered locus">Mbur_1025</name>
</gene>
<accession>Q12X66</accession>
<name>ARLY_METBU</name>
<reference key="1">
    <citation type="journal article" date="2009" name="ISME J.">
        <title>The genome sequence of the psychrophilic archaeon, Methanococcoides burtonii: the role of genome evolution in cold adaptation.</title>
        <authorList>
            <person name="Allen M.A."/>
            <person name="Lauro F.M."/>
            <person name="Williams T.J."/>
            <person name="Burg D."/>
            <person name="Siddiqui K.S."/>
            <person name="De Francisci D."/>
            <person name="Chong K.W."/>
            <person name="Pilak O."/>
            <person name="Chew H.H."/>
            <person name="De Maere M.Z."/>
            <person name="Ting L."/>
            <person name="Katrib M."/>
            <person name="Ng C."/>
            <person name="Sowers K.R."/>
            <person name="Galperin M.Y."/>
            <person name="Anderson I.J."/>
            <person name="Ivanova N."/>
            <person name="Dalin E."/>
            <person name="Martinez M."/>
            <person name="Lapidus A."/>
            <person name="Hauser L."/>
            <person name="Land M."/>
            <person name="Thomas T."/>
            <person name="Cavicchioli R."/>
        </authorList>
    </citation>
    <scope>NUCLEOTIDE SEQUENCE [LARGE SCALE GENOMIC DNA]</scope>
    <source>
        <strain>DSM 6242 / NBRC 107633 / OCM 468 / ACE-M</strain>
    </source>
</reference>